<sequence>MLIFELSKTGRQAKAQIPRAVSKNYSIPEEFQRKSRPRLPACSELQVVRHFTCLSQKNFSIDTNFYPLGSCTMKYNPRGVHKAASLPGFINRHPLAMDNESQGFLETLYKLQNYISEITGMPGVSLTPMAGSQGEFAGVAMIKAYHQSRGDTARDEILIPDAAHGTNPASAVMCGFKVVEIATAPDGDIDLDELKRKVGPRTAGIMLTNPSTLGLFMRQIKEIASLVHQAGGLLYYDGANLNAILGKVRPGDMGFDVMHLNLHKTFATPHGGGGPGAGPVAVGKRLIPYMPLPVVKKTDSGYHWATRQDYPQSIGRLSCFMGNAGILLRAYFYMLVLGKEGLLRVSEFATLNANYLLKELTKVGYTAAYPDRRASHEFILTLNSEKKNYDVTAMDFAKRLLDYGVHAPTTYFPLLVPECLLIEPPETESKEELDAFVAVMKTIREEASKQPDILKAAPHTLPVKRLDDVKAARELDLNYFATHE</sequence>
<reference key="1">
    <citation type="journal article" date="2004" name="Nat. Genet.">
        <title>Evidence in the Legionella pneumophila genome for exploitation of host cell functions and high genome plasticity.</title>
        <authorList>
            <person name="Cazalet C."/>
            <person name="Rusniok C."/>
            <person name="Brueggemann H."/>
            <person name="Zidane N."/>
            <person name="Magnier A."/>
            <person name="Ma L."/>
            <person name="Tichit M."/>
            <person name="Jarraud S."/>
            <person name="Bouchier C."/>
            <person name="Vandenesch F."/>
            <person name="Kunst F."/>
            <person name="Etienne J."/>
            <person name="Glaser P."/>
            <person name="Buchrieser C."/>
        </authorList>
    </citation>
    <scope>NUCLEOTIDE SEQUENCE [LARGE SCALE GENOMIC DNA]</scope>
    <source>
        <strain>Lens</strain>
    </source>
</reference>
<comment type="function">
    <text evidence="1">The glycine cleavage system catalyzes the degradation of glycine. The P protein binds the alpha-amino group of glycine through its pyridoxal phosphate cofactor; CO(2) is released and the remaining methylamine moiety is then transferred to the lipoamide cofactor of the H protein.</text>
</comment>
<comment type="catalytic activity">
    <reaction evidence="1">
        <text>N(6)-[(R)-lipoyl]-L-lysyl-[glycine-cleavage complex H protein] + glycine + H(+) = N(6)-[(R)-S(8)-aminomethyldihydrolipoyl]-L-lysyl-[glycine-cleavage complex H protein] + CO2</text>
        <dbReference type="Rhea" id="RHEA:24304"/>
        <dbReference type="Rhea" id="RHEA-COMP:10494"/>
        <dbReference type="Rhea" id="RHEA-COMP:10495"/>
        <dbReference type="ChEBI" id="CHEBI:15378"/>
        <dbReference type="ChEBI" id="CHEBI:16526"/>
        <dbReference type="ChEBI" id="CHEBI:57305"/>
        <dbReference type="ChEBI" id="CHEBI:83099"/>
        <dbReference type="ChEBI" id="CHEBI:83143"/>
        <dbReference type="EC" id="1.4.4.2"/>
    </reaction>
</comment>
<comment type="cofactor">
    <cofactor evidence="1">
        <name>pyridoxal 5'-phosphate</name>
        <dbReference type="ChEBI" id="CHEBI:597326"/>
    </cofactor>
</comment>
<comment type="subunit">
    <text evidence="1">The glycine cleavage system is composed of four proteins: P, T, L and H. In this organism, the P 'protein' is a heterodimer of two subunits.</text>
</comment>
<comment type="similarity">
    <text evidence="1">Belongs to the GcvP family. C-terminal subunit subfamily.</text>
</comment>
<name>GCSPB_LEGPL</name>
<keyword id="KW-0560">Oxidoreductase</keyword>
<keyword id="KW-0663">Pyridoxal phosphate</keyword>
<organism>
    <name type="scientific">Legionella pneumophila (strain Lens)</name>
    <dbReference type="NCBI Taxonomy" id="297245"/>
    <lineage>
        <taxon>Bacteria</taxon>
        <taxon>Pseudomonadati</taxon>
        <taxon>Pseudomonadota</taxon>
        <taxon>Gammaproteobacteria</taxon>
        <taxon>Legionellales</taxon>
        <taxon>Legionellaceae</taxon>
        <taxon>Legionella</taxon>
    </lineage>
</organism>
<dbReference type="EC" id="1.4.4.2" evidence="1"/>
<dbReference type="EMBL" id="CR628337">
    <property type="protein sequence ID" value="CAH14343.1"/>
    <property type="molecule type" value="Genomic_DNA"/>
</dbReference>
<dbReference type="RefSeq" id="WP_011214397.1">
    <property type="nucleotide sequence ID" value="NC_006369.1"/>
</dbReference>
<dbReference type="SMR" id="Q5X0A8"/>
<dbReference type="KEGG" id="lpf:lpl0113"/>
<dbReference type="LegioList" id="lpl0113"/>
<dbReference type="HOGENOM" id="CLU_004620_5_0_6"/>
<dbReference type="Proteomes" id="UP000002517">
    <property type="component" value="Chromosome"/>
</dbReference>
<dbReference type="GO" id="GO:0005829">
    <property type="term" value="C:cytosol"/>
    <property type="evidence" value="ECO:0007669"/>
    <property type="project" value="TreeGrafter"/>
</dbReference>
<dbReference type="GO" id="GO:0005960">
    <property type="term" value="C:glycine cleavage complex"/>
    <property type="evidence" value="ECO:0007669"/>
    <property type="project" value="TreeGrafter"/>
</dbReference>
<dbReference type="GO" id="GO:0016594">
    <property type="term" value="F:glycine binding"/>
    <property type="evidence" value="ECO:0007669"/>
    <property type="project" value="TreeGrafter"/>
</dbReference>
<dbReference type="GO" id="GO:0004375">
    <property type="term" value="F:glycine dehydrogenase (decarboxylating) activity"/>
    <property type="evidence" value="ECO:0007669"/>
    <property type="project" value="UniProtKB-EC"/>
</dbReference>
<dbReference type="GO" id="GO:0030170">
    <property type="term" value="F:pyridoxal phosphate binding"/>
    <property type="evidence" value="ECO:0007669"/>
    <property type="project" value="TreeGrafter"/>
</dbReference>
<dbReference type="GO" id="GO:0019464">
    <property type="term" value="P:glycine decarboxylation via glycine cleavage system"/>
    <property type="evidence" value="ECO:0007669"/>
    <property type="project" value="UniProtKB-UniRule"/>
</dbReference>
<dbReference type="FunFam" id="3.40.640.10:FF:000224">
    <property type="entry name" value="Probable glycine dehydrogenase (decarboxylating) subunit 2"/>
    <property type="match status" value="1"/>
</dbReference>
<dbReference type="FunFam" id="3.90.1150.10:FF:000014">
    <property type="entry name" value="Probable glycine dehydrogenase (decarboxylating) subunit 2"/>
    <property type="match status" value="1"/>
</dbReference>
<dbReference type="Gene3D" id="6.20.440.10">
    <property type="match status" value="1"/>
</dbReference>
<dbReference type="Gene3D" id="3.90.1150.10">
    <property type="entry name" value="Aspartate Aminotransferase, domain 1"/>
    <property type="match status" value="1"/>
</dbReference>
<dbReference type="Gene3D" id="3.40.640.10">
    <property type="entry name" value="Type I PLP-dependent aspartate aminotransferase-like (Major domain)"/>
    <property type="match status" value="1"/>
</dbReference>
<dbReference type="HAMAP" id="MF_00713">
    <property type="entry name" value="GcvPB"/>
    <property type="match status" value="1"/>
</dbReference>
<dbReference type="InterPro" id="IPR000192">
    <property type="entry name" value="Aminotrans_V_dom"/>
</dbReference>
<dbReference type="InterPro" id="IPR023012">
    <property type="entry name" value="GcvPB"/>
</dbReference>
<dbReference type="InterPro" id="IPR049316">
    <property type="entry name" value="GDC-P_C"/>
</dbReference>
<dbReference type="InterPro" id="IPR020581">
    <property type="entry name" value="GDC_P"/>
</dbReference>
<dbReference type="InterPro" id="IPR015424">
    <property type="entry name" value="PyrdxlP-dep_Trfase"/>
</dbReference>
<dbReference type="InterPro" id="IPR015421">
    <property type="entry name" value="PyrdxlP-dep_Trfase_major"/>
</dbReference>
<dbReference type="InterPro" id="IPR015422">
    <property type="entry name" value="PyrdxlP-dep_Trfase_small"/>
</dbReference>
<dbReference type="NCBIfam" id="NF003346">
    <property type="entry name" value="PRK04366.1"/>
    <property type="match status" value="1"/>
</dbReference>
<dbReference type="PANTHER" id="PTHR11773:SF1">
    <property type="entry name" value="GLYCINE DEHYDROGENASE (DECARBOXYLATING), MITOCHONDRIAL"/>
    <property type="match status" value="1"/>
</dbReference>
<dbReference type="PANTHER" id="PTHR11773">
    <property type="entry name" value="GLYCINE DEHYDROGENASE, DECARBOXYLATING"/>
    <property type="match status" value="1"/>
</dbReference>
<dbReference type="Pfam" id="PF00266">
    <property type="entry name" value="Aminotran_5"/>
    <property type="match status" value="1"/>
</dbReference>
<dbReference type="Pfam" id="PF21478">
    <property type="entry name" value="GcvP2_C"/>
    <property type="match status" value="1"/>
</dbReference>
<dbReference type="SUPFAM" id="SSF53383">
    <property type="entry name" value="PLP-dependent transferases"/>
    <property type="match status" value="1"/>
</dbReference>
<accession>Q5X0A8</accession>
<evidence type="ECO:0000255" key="1">
    <source>
        <dbReference type="HAMAP-Rule" id="MF_00713"/>
    </source>
</evidence>
<proteinExistence type="inferred from homology"/>
<gene>
    <name evidence="1" type="primary">gcvPB</name>
    <name type="ordered locus">lpl0113</name>
</gene>
<protein>
    <recommendedName>
        <fullName evidence="1">Probable glycine dehydrogenase (decarboxylating) subunit 2</fullName>
        <ecNumber evidence="1">1.4.4.2</ecNumber>
    </recommendedName>
    <alternativeName>
        <fullName evidence="1">Glycine cleavage system P-protein subunit 2</fullName>
    </alternativeName>
    <alternativeName>
        <fullName evidence="1">Glycine decarboxylase subunit 2</fullName>
    </alternativeName>
    <alternativeName>
        <fullName evidence="1">Glycine dehydrogenase (aminomethyl-transferring) subunit 2</fullName>
    </alternativeName>
</protein>
<feature type="chain" id="PRO_1000045696" description="Probable glycine dehydrogenase (decarboxylating) subunit 2">
    <location>
        <begin position="1"/>
        <end position="484"/>
    </location>
</feature>
<feature type="modified residue" description="N6-(pyridoxal phosphate)lysine" evidence="1">
    <location>
        <position position="264"/>
    </location>
</feature>